<name>EUTC_SHISS</name>
<sequence>MDQKQIEEIVRSVMASMGQAAPAPSEAKCATTNCAAPVTSESCALDLGSAEAKAWIGVENPHRADVLTELRRSTVARVCTGRTGPRPRTQALLRFLADHSRSKDTVLKEVPEEWVKAQGLLEVRSEISDKNLYLTRPDMGRRLCAEAVEALKAQCVANPDVQVVISDGLSTDAITVNYEEILPPLMAGLKQAGLKVGTPFFVRYGRVKIEDQIGEILGAKVVILLVGERPGLGQSESLSCYAVYSPRMATTVEADRTCISNIHQGGTPPVEAAAVIVDLAKRMLEQKASGINMTR</sequence>
<accession>Q3YZA3</accession>
<evidence type="ECO:0000255" key="1">
    <source>
        <dbReference type="HAMAP-Rule" id="MF_00601"/>
    </source>
</evidence>
<reference key="1">
    <citation type="journal article" date="2005" name="Nucleic Acids Res.">
        <title>Genome dynamics and diversity of Shigella species, the etiologic agents of bacillary dysentery.</title>
        <authorList>
            <person name="Yang F."/>
            <person name="Yang J."/>
            <person name="Zhang X."/>
            <person name="Chen L."/>
            <person name="Jiang Y."/>
            <person name="Yan Y."/>
            <person name="Tang X."/>
            <person name="Wang J."/>
            <person name="Xiong Z."/>
            <person name="Dong J."/>
            <person name="Xue Y."/>
            <person name="Zhu Y."/>
            <person name="Xu X."/>
            <person name="Sun L."/>
            <person name="Chen S."/>
            <person name="Nie H."/>
            <person name="Peng J."/>
            <person name="Xu J."/>
            <person name="Wang Y."/>
            <person name="Yuan Z."/>
            <person name="Wen Y."/>
            <person name="Yao Z."/>
            <person name="Shen Y."/>
            <person name="Qiang B."/>
            <person name="Hou Y."/>
            <person name="Yu J."/>
            <person name="Jin Q."/>
        </authorList>
    </citation>
    <scope>NUCLEOTIDE SEQUENCE [LARGE SCALE GENOMIC DNA]</scope>
    <source>
        <strain>Ss046</strain>
    </source>
</reference>
<keyword id="KW-1283">Bacterial microcompartment</keyword>
<keyword id="KW-0846">Cobalamin</keyword>
<keyword id="KW-0170">Cobalt</keyword>
<keyword id="KW-0456">Lyase</keyword>
<keyword id="KW-1185">Reference proteome</keyword>
<dbReference type="EC" id="4.3.1.7" evidence="1"/>
<dbReference type="EMBL" id="CP000038">
    <property type="protein sequence ID" value="AAZ89159.1"/>
    <property type="molecule type" value="Genomic_DNA"/>
</dbReference>
<dbReference type="RefSeq" id="WP_000372319.1">
    <property type="nucleotide sequence ID" value="NC_007384.1"/>
</dbReference>
<dbReference type="SMR" id="Q3YZA3"/>
<dbReference type="GeneID" id="93774691"/>
<dbReference type="KEGG" id="ssn:SSON_2529"/>
<dbReference type="HOGENOM" id="CLU_068224_0_0_6"/>
<dbReference type="UniPathway" id="UPA00560"/>
<dbReference type="Proteomes" id="UP000002529">
    <property type="component" value="Chromosome"/>
</dbReference>
<dbReference type="GO" id="GO:0009350">
    <property type="term" value="C:ethanolamine ammonia-lyase complex"/>
    <property type="evidence" value="ECO:0007669"/>
    <property type="project" value="UniProtKB-UniRule"/>
</dbReference>
<dbReference type="GO" id="GO:0031471">
    <property type="term" value="C:ethanolamine degradation polyhedral organelle"/>
    <property type="evidence" value="ECO:0007669"/>
    <property type="project" value="UniProtKB-UniRule"/>
</dbReference>
<dbReference type="GO" id="GO:0031419">
    <property type="term" value="F:cobalamin binding"/>
    <property type="evidence" value="ECO:0007669"/>
    <property type="project" value="UniProtKB-UniRule"/>
</dbReference>
<dbReference type="GO" id="GO:0008851">
    <property type="term" value="F:ethanolamine ammonia-lyase activity"/>
    <property type="evidence" value="ECO:0007669"/>
    <property type="project" value="UniProtKB-UniRule"/>
</dbReference>
<dbReference type="GO" id="GO:0006520">
    <property type="term" value="P:amino acid metabolic process"/>
    <property type="evidence" value="ECO:0007669"/>
    <property type="project" value="InterPro"/>
</dbReference>
<dbReference type="GO" id="GO:0046336">
    <property type="term" value="P:ethanolamine catabolic process"/>
    <property type="evidence" value="ECO:0007669"/>
    <property type="project" value="UniProtKB-UniRule"/>
</dbReference>
<dbReference type="FunFam" id="3.40.50.11240:FF:000001">
    <property type="entry name" value="Ethanolamine ammonia-lyase light chain"/>
    <property type="match status" value="1"/>
</dbReference>
<dbReference type="Gene3D" id="6.10.140.690">
    <property type="match status" value="1"/>
</dbReference>
<dbReference type="Gene3D" id="6.10.250.2060">
    <property type="match status" value="1"/>
</dbReference>
<dbReference type="Gene3D" id="3.40.50.11240">
    <property type="entry name" value="Ethanolamine ammonia-lyase light chain (EutC)"/>
    <property type="match status" value="1"/>
</dbReference>
<dbReference type="HAMAP" id="MF_00601">
    <property type="entry name" value="EutC"/>
    <property type="match status" value="1"/>
</dbReference>
<dbReference type="InterPro" id="IPR009246">
    <property type="entry name" value="EutC"/>
</dbReference>
<dbReference type="InterPro" id="IPR042251">
    <property type="entry name" value="EutC_C"/>
</dbReference>
<dbReference type="NCBIfam" id="NF003971">
    <property type="entry name" value="PRK05465.1"/>
    <property type="match status" value="1"/>
</dbReference>
<dbReference type="PANTHER" id="PTHR39330">
    <property type="entry name" value="ETHANOLAMINE AMMONIA-LYASE LIGHT CHAIN"/>
    <property type="match status" value="1"/>
</dbReference>
<dbReference type="PANTHER" id="PTHR39330:SF1">
    <property type="entry name" value="ETHANOLAMINE AMMONIA-LYASE SMALL SUBUNIT"/>
    <property type="match status" value="1"/>
</dbReference>
<dbReference type="Pfam" id="PF05985">
    <property type="entry name" value="EutC"/>
    <property type="match status" value="1"/>
</dbReference>
<dbReference type="PIRSF" id="PIRSF018982">
    <property type="entry name" value="EutC"/>
    <property type="match status" value="1"/>
</dbReference>
<organism>
    <name type="scientific">Shigella sonnei (strain Ss046)</name>
    <dbReference type="NCBI Taxonomy" id="300269"/>
    <lineage>
        <taxon>Bacteria</taxon>
        <taxon>Pseudomonadati</taxon>
        <taxon>Pseudomonadota</taxon>
        <taxon>Gammaproteobacteria</taxon>
        <taxon>Enterobacterales</taxon>
        <taxon>Enterobacteriaceae</taxon>
        <taxon>Shigella</taxon>
    </lineage>
</organism>
<gene>
    <name evidence="1" type="primary">eutC</name>
    <name type="ordered locus">SSON_2529</name>
</gene>
<feature type="chain" id="PRO_1000025866" description="Ethanolamine ammonia-lyase small subunit">
    <location>
        <begin position="1"/>
        <end position="295"/>
    </location>
</feature>
<feature type="binding site" evidence="1">
    <location>
        <position position="207"/>
    </location>
    <ligand>
        <name>adenosylcob(III)alamin</name>
        <dbReference type="ChEBI" id="CHEBI:18408"/>
    </ligand>
</feature>
<feature type="binding site" evidence="1">
    <location>
        <position position="228"/>
    </location>
    <ligand>
        <name>adenosylcob(III)alamin</name>
        <dbReference type="ChEBI" id="CHEBI:18408"/>
    </ligand>
</feature>
<feature type="binding site" evidence="1">
    <location>
        <position position="258"/>
    </location>
    <ligand>
        <name>adenosylcob(III)alamin</name>
        <dbReference type="ChEBI" id="CHEBI:18408"/>
    </ligand>
</feature>
<protein>
    <recommendedName>
        <fullName evidence="1">Ethanolamine ammonia-lyase small subunit</fullName>
        <shortName evidence="1">EAL small subunit</shortName>
        <ecNumber evidence="1">4.3.1.7</ecNumber>
    </recommendedName>
</protein>
<proteinExistence type="inferred from homology"/>
<comment type="function">
    <text evidence="1">Catalyzes the deamination of various vicinal amino-alcohols to oxo compounds. Allows this organism to utilize ethanolamine as the sole source of nitrogen and carbon in the presence of external vitamin B12.</text>
</comment>
<comment type="catalytic activity">
    <reaction evidence="1">
        <text>ethanolamine = acetaldehyde + NH4(+)</text>
        <dbReference type="Rhea" id="RHEA:15313"/>
        <dbReference type="ChEBI" id="CHEBI:15343"/>
        <dbReference type="ChEBI" id="CHEBI:28938"/>
        <dbReference type="ChEBI" id="CHEBI:57603"/>
        <dbReference type="EC" id="4.3.1.7"/>
    </reaction>
</comment>
<comment type="cofactor">
    <cofactor evidence="1">
        <name>adenosylcob(III)alamin</name>
        <dbReference type="ChEBI" id="CHEBI:18408"/>
    </cofactor>
    <text evidence="1">Binds between the large and small subunits.</text>
</comment>
<comment type="pathway">
    <text evidence="1">Amine and polyamine degradation; ethanolamine degradation.</text>
</comment>
<comment type="subunit">
    <text evidence="1">The basic unit is a heterodimer which dimerizes to form tetramers. The heterotetramers trimerize; 6 large subunits form a core ring with 6 small subunits projecting outwards.</text>
</comment>
<comment type="subcellular location">
    <subcellularLocation>
        <location evidence="1">Bacterial microcompartment</location>
    </subcellularLocation>
</comment>
<comment type="similarity">
    <text evidence="1">Belongs to the EutC family.</text>
</comment>